<comment type="function">
    <text evidence="1">Catalyzes the conversion of 4-hydroxy-tetrahydrodipicolinate (HTPA) to tetrahydrodipicolinate.</text>
</comment>
<comment type="catalytic activity">
    <reaction evidence="1">
        <text>(S)-2,3,4,5-tetrahydrodipicolinate + NAD(+) + H2O = (2S,4S)-4-hydroxy-2,3,4,5-tetrahydrodipicolinate + NADH + H(+)</text>
        <dbReference type="Rhea" id="RHEA:35323"/>
        <dbReference type="ChEBI" id="CHEBI:15377"/>
        <dbReference type="ChEBI" id="CHEBI:15378"/>
        <dbReference type="ChEBI" id="CHEBI:16845"/>
        <dbReference type="ChEBI" id="CHEBI:57540"/>
        <dbReference type="ChEBI" id="CHEBI:57945"/>
        <dbReference type="ChEBI" id="CHEBI:67139"/>
        <dbReference type="EC" id="1.17.1.8"/>
    </reaction>
</comment>
<comment type="catalytic activity">
    <reaction evidence="1">
        <text>(S)-2,3,4,5-tetrahydrodipicolinate + NADP(+) + H2O = (2S,4S)-4-hydroxy-2,3,4,5-tetrahydrodipicolinate + NADPH + H(+)</text>
        <dbReference type="Rhea" id="RHEA:35331"/>
        <dbReference type="ChEBI" id="CHEBI:15377"/>
        <dbReference type="ChEBI" id="CHEBI:15378"/>
        <dbReference type="ChEBI" id="CHEBI:16845"/>
        <dbReference type="ChEBI" id="CHEBI:57783"/>
        <dbReference type="ChEBI" id="CHEBI:58349"/>
        <dbReference type="ChEBI" id="CHEBI:67139"/>
        <dbReference type="EC" id="1.17.1.8"/>
    </reaction>
</comment>
<comment type="pathway">
    <text evidence="1">Amino-acid biosynthesis; L-lysine biosynthesis via DAP pathway; (S)-tetrahydrodipicolinate from L-aspartate: step 4/4.</text>
</comment>
<comment type="subcellular location">
    <subcellularLocation>
        <location evidence="1">Cytoplasm</location>
    </subcellularLocation>
</comment>
<comment type="similarity">
    <text evidence="1">Belongs to the DapB family.</text>
</comment>
<comment type="caution">
    <text evidence="2">Was originally thought to be a dihydrodipicolinate reductase (DHDPR), catalyzing the conversion of dihydrodipicolinate to tetrahydrodipicolinate. However, it was shown in E.coli that the substrate of the enzymatic reaction is not dihydrodipicolinate (DHDP) but in fact (2S,4S)-4-hydroxy-2,3,4,5-tetrahydrodipicolinic acid (HTPA), the product released by the DapA-catalyzed reaction.</text>
</comment>
<reference key="1">
    <citation type="journal article" date="2008" name="DNA Res.">
        <title>Comparative genome analysis of Lactobacillus reuteri and Lactobacillus fermentum reveal a genomic island for reuterin and cobalamin production.</title>
        <authorList>
            <person name="Morita H."/>
            <person name="Toh H."/>
            <person name="Fukuda S."/>
            <person name="Horikawa H."/>
            <person name="Oshima K."/>
            <person name="Suzuki T."/>
            <person name="Murakami M."/>
            <person name="Hisamatsu S."/>
            <person name="Kato Y."/>
            <person name="Takizawa T."/>
            <person name="Fukuoka H."/>
            <person name="Yoshimura T."/>
            <person name="Itoh K."/>
            <person name="O'Sullivan D.J."/>
            <person name="McKay L.L."/>
            <person name="Ohno H."/>
            <person name="Kikuchi J."/>
            <person name="Masaoka T."/>
            <person name="Hattori M."/>
        </authorList>
    </citation>
    <scope>NUCLEOTIDE SEQUENCE [LARGE SCALE GENOMIC DNA]</scope>
    <source>
        <strain>NBRC 3956 / LMG 18251</strain>
    </source>
</reference>
<protein>
    <recommendedName>
        <fullName evidence="1">4-hydroxy-tetrahydrodipicolinate reductase</fullName>
        <shortName evidence="1">HTPA reductase</shortName>
        <ecNumber evidence="1">1.17.1.8</ecNumber>
    </recommendedName>
</protein>
<name>DAPB_LIMF3</name>
<sequence length="259" mass="27467">MTKVLIAGFAGAMGQQAVTLVKSLPGFELSAVVGHHLTDLDPTSYGLENSTTVYADREQVETGAADIWLDFTVPAAVFENVSYALRHGMAPVVGTTGLSDEQVEELQQLAKQNGLGGLIAPNFGMSAVLLMKFAKEAAAYFPEVEIIEMHHEDKKDAPSGTALATAKLISENRPAHETAPDSTESLPGARGGDYQGIKLHAVRLPGYVAHEQVLFGGSGEALTIRQDSFDRSSFMSGVKVGLEKVGTLTELVVGLENVL</sequence>
<organism>
    <name type="scientific">Limosilactobacillus fermentum (strain NBRC 3956 / LMG 18251)</name>
    <name type="common">Lactobacillus fermentum</name>
    <dbReference type="NCBI Taxonomy" id="334390"/>
    <lineage>
        <taxon>Bacteria</taxon>
        <taxon>Bacillati</taxon>
        <taxon>Bacillota</taxon>
        <taxon>Bacilli</taxon>
        <taxon>Lactobacillales</taxon>
        <taxon>Lactobacillaceae</taxon>
        <taxon>Limosilactobacillus</taxon>
    </lineage>
</organism>
<keyword id="KW-0028">Amino-acid biosynthesis</keyword>
<keyword id="KW-0963">Cytoplasm</keyword>
<keyword id="KW-0220">Diaminopimelate biosynthesis</keyword>
<keyword id="KW-0457">Lysine biosynthesis</keyword>
<keyword id="KW-0520">NAD</keyword>
<keyword id="KW-0521">NADP</keyword>
<keyword id="KW-0560">Oxidoreductase</keyword>
<keyword id="KW-1185">Reference proteome</keyword>
<feature type="chain" id="PRO_1000117374" description="4-hydroxy-tetrahydrodipicolinate reductase">
    <location>
        <begin position="1"/>
        <end position="259"/>
    </location>
</feature>
<feature type="active site" description="Proton donor/acceptor" evidence="1">
    <location>
        <position position="150"/>
    </location>
</feature>
<feature type="active site" description="Proton donor" evidence="1">
    <location>
        <position position="154"/>
    </location>
</feature>
<feature type="binding site" evidence="1">
    <location>
        <begin position="8"/>
        <end position="13"/>
    </location>
    <ligand>
        <name>NAD(+)</name>
        <dbReference type="ChEBI" id="CHEBI:57540"/>
    </ligand>
</feature>
<feature type="binding site" evidence="1">
    <location>
        <begin position="94"/>
        <end position="96"/>
    </location>
    <ligand>
        <name>NAD(+)</name>
        <dbReference type="ChEBI" id="CHEBI:57540"/>
    </ligand>
</feature>
<feature type="binding site" evidence="1">
    <location>
        <begin position="120"/>
        <end position="123"/>
    </location>
    <ligand>
        <name>NAD(+)</name>
        <dbReference type="ChEBI" id="CHEBI:57540"/>
    </ligand>
</feature>
<feature type="binding site" evidence="1">
    <location>
        <position position="151"/>
    </location>
    <ligand>
        <name>(S)-2,3,4,5-tetrahydrodipicolinate</name>
        <dbReference type="ChEBI" id="CHEBI:16845"/>
    </ligand>
</feature>
<feature type="binding site" evidence="1">
    <location>
        <begin position="160"/>
        <end position="161"/>
    </location>
    <ligand>
        <name>(S)-2,3,4,5-tetrahydrodipicolinate</name>
        <dbReference type="ChEBI" id="CHEBI:16845"/>
    </ligand>
</feature>
<dbReference type="EC" id="1.17.1.8" evidence="1"/>
<dbReference type="EMBL" id="AP008937">
    <property type="protein sequence ID" value="BAG27194.1"/>
    <property type="molecule type" value="Genomic_DNA"/>
</dbReference>
<dbReference type="RefSeq" id="WP_003683232.1">
    <property type="nucleotide sequence ID" value="NC_010610.1"/>
</dbReference>
<dbReference type="SMR" id="B2GC12"/>
<dbReference type="KEGG" id="lfe:LAF_0858"/>
<dbReference type="eggNOG" id="COG0289">
    <property type="taxonomic scope" value="Bacteria"/>
</dbReference>
<dbReference type="HOGENOM" id="CLU_047479_0_1_9"/>
<dbReference type="UniPathway" id="UPA00034">
    <property type="reaction ID" value="UER00018"/>
</dbReference>
<dbReference type="Proteomes" id="UP000001697">
    <property type="component" value="Chromosome"/>
</dbReference>
<dbReference type="GO" id="GO:0005829">
    <property type="term" value="C:cytosol"/>
    <property type="evidence" value="ECO:0007669"/>
    <property type="project" value="TreeGrafter"/>
</dbReference>
<dbReference type="GO" id="GO:0008839">
    <property type="term" value="F:4-hydroxy-tetrahydrodipicolinate reductase"/>
    <property type="evidence" value="ECO:0007669"/>
    <property type="project" value="UniProtKB-EC"/>
</dbReference>
<dbReference type="GO" id="GO:0051287">
    <property type="term" value="F:NAD binding"/>
    <property type="evidence" value="ECO:0007669"/>
    <property type="project" value="UniProtKB-UniRule"/>
</dbReference>
<dbReference type="GO" id="GO:0050661">
    <property type="term" value="F:NADP binding"/>
    <property type="evidence" value="ECO:0007669"/>
    <property type="project" value="UniProtKB-UniRule"/>
</dbReference>
<dbReference type="GO" id="GO:0016726">
    <property type="term" value="F:oxidoreductase activity, acting on CH or CH2 groups, NAD or NADP as acceptor"/>
    <property type="evidence" value="ECO:0007669"/>
    <property type="project" value="UniProtKB-UniRule"/>
</dbReference>
<dbReference type="GO" id="GO:0019877">
    <property type="term" value="P:diaminopimelate biosynthetic process"/>
    <property type="evidence" value="ECO:0007669"/>
    <property type="project" value="UniProtKB-UniRule"/>
</dbReference>
<dbReference type="GO" id="GO:0009089">
    <property type="term" value="P:lysine biosynthetic process via diaminopimelate"/>
    <property type="evidence" value="ECO:0007669"/>
    <property type="project" value="UniProtKB-UniRule"/>
</dbReference>
<dbReference type="CDD" id="cd02274">
    <property type="entry name" value="DHDPR_N"/>
    <property type="match status" value="1"/>
</dbReference>
<dbReference type="FunFam" id="3.30.360.10:FF:000009">
    <property type="entry name" value="4-hydroxy-tetrahydrodipicolinate reductase"/>
    <property type="match status" value="1"/>
</dbReference>
<dbReference type="Gene3D" id="3.30.360.10">
    <property type="entry name" value="Dihydrodipicolinate Reductase, domain 2"/>
    <property type="match status" value="1"/>
</dbReference>
<dbReference type="Gene3D" id="3.40.50.720">
    <property type="entry name" value="NAD(P)-binding Rossmann-like Domain"/>
    <property type="match status" value="1"/>
</dbReference>
<dbReference type="HAMAP" id="MF_00102">
    <property type="entry name" value="DapB"/>
    <property type="match status" value="1"/>
</dbReference>
<dbReference type="InterPro" id="IPR022663">
    <property type="entry name" value="DapB_C"/>
</dbReference>
<dbReference type="InterPro" id="IPR000846">
    <property type="entry name" value="DapB_N"/>
</dbReference>
<dbReference type="InterPro" id="IPR022664">
    <property type="entry name" value="DapB_N_CS"/>
</dbReference>
<dbReference type="InterPro" id="IPR023940">
    <property type="entry name" value="DHDPR_bac"/>
</dbReference>
<dbReference type="InterPro" id="IPR036291">
    <property type="entry name" value="NAD(P)-bd_dom_sf"/>
</dbReference>
<dbReference type="NCBIfam" id="TIGR00036">
    <property type="entry name" value="dapB"/>
    <property type="match status" value="1"/>
</dbReference>
<dbReference type="PANTHER" id="PTHR20836:SF0">
    <property type="entry name" value="4-HYDROXY-TETRAHYDRODIPICOLINATE REDUCTASE 1, CHLOROPLASTIC-RELATED"/>
    <property type="match status" value="1"/>
</dbReference>
<dbReference type="PANTHER" id="PTHR20836">
    <property type="entry name" value="DIHYDRODIPICOLINATE REDUCTASE"/>
    <property type="match status" value="1"/>
</dbReference>
<dbReference type="Pfam" id="PF05173">
    <property type="entry name" value="DapB_C"/>
    <property type="match status" value="1"/>
</dbReference>
<dbReference type="Pfam" id="PF01113">
    <property type="entry name" value="DapB_N"/>
    <property type="match status" value="1"/>
</dbReference>
<dbReference type="PIRSF" id="PIRSF000161">
    <property type="entry name" value="DHPR"/>
    <property type="match status" value="1"/>
</dbReference>
<dbReference type="SUPFAM" id="SSF55347">
    <property type="entry name" value="Glyceraldehyde-3-phosphate dehydrogenase-like, C-terminal domain"/>
    <property type="match status" value="1"/>
</dbReference>
<dbReference type="SUPFAM" id="SSF51735">
    <property type="entry name" value="NAD(P)-binding Rossmann-fold domains"/>
    <property type="match status" value="1"/>
</dbReference>
<dbReference type="PROSITE" id="PS01298">
    <property type="entry name" value="DAPB"/>
    <property type="match status" value="1"/>
</dbReference>
<gene>
    <name evidence="1" type="primary">dapB</name>
    <name type="ordered locus">LAF_0858</name>
</gene>
<accession>B2GC12</accession>
<evidence type="ECO:0000255" key="1">
    <source>
        <dbReference type="HAMAP-Rule" id="MF_00102"/>
    </source>
</evidence>
<evidence type="ECO:0000305" key="2"/>
<proteinExistence type="inferred from homology"/>